<comment type="similarity">
    <text evidence="1">Belongs to the universal ribosomal protein uS2 family.</text>
</comment>
<name>RS2_RHIWR</name>
<sequence length="250" mass="27093">MAAPTVSMQALLDAGAHFGHQTHRWNPKMKPYLFGDRNGIHIIDLSQTVPLMARALDLISQTVQHGGKVLFVGTKRQAQEPIAEAARRSGQHYVNHRWLGGMLTNWKTISNSIKRFKALEEQLSGDTHGLTKKEVLQLTRERDKFELSLGGIRDMGGIPDVMFVIDANKEELAIKEANTLGIPVVAILDSNVSPDGIAFPVPANDDAARAIRLYCEAVAEAATRGAQGGRQARGEDLGAAVEAPSEDALA</sequence>
<dbReference type="EMBL" id="CP000699">
    <property type="protein sequence ID" value="ABQ66828.1"/>
    <property type="molecule type" value="Genomic_DNA"/>
</dbReference>
<dbReference type="SMR" id="A5V3G2"/>
<dbReference type="STRING" id="392499.Swit_0460"/>
<dbReference type="PaxDb" id="392499-Swit_0460"/>
<dbReference type="KEGG" id="swi:Swit_0460"/>
<dbReference type="eggNOG" id="COG0052">
    <property type="taxonomic scope" value="Bacteria"/>
</dbReference>
<dbReference type="HOGENOM" id="CLU_040318_2_1_5"/>
<dbReference type="OrthoDB" id="9808036at2"/>
<dbReference type="Proteomes" id="UP000001989">
    <property type="component" value="Chromosome"/>
</dbReference>
<dbReference type="GO" id="GO:0022627">
    <property type="term" value="C:cytosolic small ribosomal subunit"/>
    <property type="evidence" value="ECO:0007669"/>
    <property type="project" value="TreeGrafter"/>
</dbReference>
<dbReference type="GO" id="GO:0003735">
    <property type="term" value="F:structural constituent of ribosome"/>
    <property type="evidence" value="ECO:0007669"/>
    <property type="project" value="InterPro"/>
</dbReference>
<dbReference type="GO" id="GO:0006412">
    <property type="term" value="P:translation"/>
    <property type="evidence" value="ECO:0007669"/>
    <property type="project" value="UniProtKB-UniRule"/>
</dbReference>
<dbReference type="CDD" id="cd01425">
    <property type="entry name" value="RPS2"/>
    <property type="match status" value="1"/>
</dbReference>
<dbReference type="FunFam" id="1.10.287.610:FF:000001">
    <property type="entry name" value="30S ribosomal protein S2"/>
    <property type="match status" value="1"/>
</dbReference>
<dbReference type="Gene3D" id="3.40.50.10490">
    <property type="entry name" value="Glucose-6-phosphate isomerase like protein, domain 1"/>
    <property type="match status" value="1"/>
</dbReference>
<dbReference type="Gene3D" id="1.10.287.610">
    <property type="entry name" value="Helix hairpin bin"/>
    <property type="match status" value="1"/>
</dbReference>
<dbReference type="HAMAP" id="MF_00291_B">
    <property type="entry name" value="Ribosomal_uS2_B"/>
    <property type="match status" value="1"/>
</dbReference>
<dbReference type="InterPro" id="IPR001865">
    <property type="entry name" value="Ribosomal_uS2"/>
</dbReference>
<dbReference type="InterPro" id="IPR005706">
    <property type="entry name" value="Ribosomal_uS2_bac/mit/plastid"/>
</dbReference>
<dbReference type="InterPro" id="IPR018130">
    <property type="entry name" value="Ribosomal_uS2_CS"/>
</dbReference>
<dbReference type="InterPro" id="IPR023591">
    <property type="entry name" value="Ribosomal_uS2_flav_dom_sf"/>
</dbReference>
<dbReference type="NCBIfam" id="TIGR01011">
    <property type="entry name" value="rpsB_bact"/>
    <property type="match status" value="1"/>
</dbReference>
<dbReference type="PANTHER" id="PTHR12534">
    <property type="entry name" value="30S RIBOSOMAL PROTEIN S2 PROKARYOTIC AND ORGANELLAR"/>
    <property type="match status" value="1"/>
</dbReference>
<dbReference type="PANTHER" id="PTHR12534:SF0">
    <property type="entry name" value="SMALL RIBOSOMAL SUBUNIT PROTEIN US2M"/>
    <property type="match status" value="1"/>
</dbReference>
<dbReference type="Pfam" id="PF00318">
    <property type="entry name" value="Ribosomal_S2"/>
    <property type="match status" value="1"/>
</dbReference>
<dbReference type="PRINTS" id="PR00395">
    <property type="entry name" value="RIBOSOMALS2"/>
</dbReference>
<dbReference type="SUPFAM" id="SSF52313">
    <property type="entry name" value="Ribosomal protein S2"/>
    <property type="match status" value="1"/>
</dbReference>
<dbReference type="PROSITE" id="PS00962">
    <property type="entry name" value="RIBOSOMAL_S2_1"/>
    <property type="match status" value="1"/>
</dbReference>
<dbReference type="PROSITE" id="PS00963">
    <property type="entry name" value="RIBOSOMAL_S2_2"/>
    <property type="match status" value="1"/>
</dbReference>
<evidence type="ECO:0000255" key="1">
    <source>
        <dbReference type="HAMAP-Rule" id="MF_00291"/>
    </source>
</evidence>
<evidence type="ECO:0000256" key="2">
    <source>
        <dbReference type="SAM" id="MobiDB-lite"/>
    </source>
</evidence>
<evidence type="ECO:0000305" key="3"/>
<keyword id="KW-1185">Reference proteome</keyword>
<keyword id="KW-0687">Ribonucleoprotein</keyword>
<keyword id="KW-0689">Ribosomal protein</keyword>
<feature type="chain" id="PRO_1000004079" description="Small ribosomal subunit protein uS2">
    <location>
        <begin position="1"/>
        <end position="250"/>
    </location>
</feature>
<feature type="region of interest" description="Disordered" evidence="2">
    <location>
        <begin position="225"/>
        <end position="250"/>
    </location>
</feature>
<reference key="1">
    <citation type="journal article" date="2010" name="J. Bacteriol.">
        <title>Genome sequence of the dioxin-mineralizing bacterium Sphingomonas wittichii RW1.</title>
        <authorList>
            <person name="Miller T.R."/>
            <person name="Delcher A.L."/>
            <person name="Salzberg S.L."/>
            <person name="Saunders E."/>
            <person name="Detter J.C."/>
            <person name="Halden R.U."/>
        </authorList>
    </citation>
    <scope>NUCLEOTIDE SEQUENCE [LARGE SCALE GENOMIC DNA]</scope>
    <source>
        <strain>DSM 6014 / CCUG 31198 / JCM 15750 / NBRC 105917 / EY 4224 / RW1</strain>
    </source>
</reference>
<accession>A5V3G2</accession>
<organism>
    <name type="scientific">Rhizorhabdus wittichii (strain DSM 6014 / CCUG 31198 / JCM 15750 / NBRC 105917 / EY 4224 / RW1)</name>
    <name type="common">Sphingomonas wittichii</name>
    <dbReference type="NCBI Taxonomy" id="392499"/>
    <lineage>
        <taxon>Bacteria</taxon>
        <taxon>Pseudomonadati</taxon>
        <taxon>Pseudomonadota</taxon>
        <taxon>Alphaproteobacteria</taxon>
        <taxon>Sphingomonadales</taxon>
        <taxon>Sphingomonadaceae</taxon>
        <taxon>Rhizorhabdus</taxon>
    </lineage>
</organism>
<protein>
    <recommendedName>
        <fullName evidence="1">Small ribosomal subunit protein uS2</fullName>
    </recommendedName>
    <alternativeName>
        <fullName evidence="3">30S ribosomal protein S2</fullName>
    </alternativeName>
</protein>
<proteinExistence type="inferred from homology"/>
<gene>
    <name evidence="1" type="primary">rpsB</name>
    <name type="ordered locus">Swit_0460</name>
</gene>